<organism>
    <name type="scientific">Methylorubrum extorquens (strain PA1)</name>
    <name type="common">Methylobacterium extorquens</name>
    <dbReference type="NCBI Taxonomy" id="419610"/>
    <lineage>
        <taxon>Bacteria</taxon>
        <taxon>Pseudomonadati</taxon>
        <taxon>Pseudomonadota</taxon>
        <taxon>Alphaproteobacteria</taxon>
        <taxon>Hyphomicrobiales</taxon>
        <taxon>Methylobacteriaceae</taxon>
        <taxon>Methylorubrum</taxon>
    </lineage>
</organism>
<name>DAPD_METEP</name>
<accession>A9W317</accession>
<comment type="catalytic activity">
    <reaction evidence="1">
        <text>(S)-2,3,4,5-tetrahydrodipicolinate + succinyl-CoA + H2O = (S)-2-succinylamino-6-oxoheptanedioate + CoA</text>
        <dbReference type="Rhea" id="RHEA:17325"/>
        <dbReference type="ChEBI" id="CHEBI:15377"/>
        <dbReference type="ChEBI" id="CHEBI:15685"/>
        <dbReference type="ChEBI" id="CHEBI:16845"/>
        <dbReference type="ChEBI" id="CHEBI:57287"/>
        <dbReference type="ChEBI" id="CHEBI:57292"/>
        <dbReference type="EC" id="2.3.1.117"/>
    </reaction>
</comment>
<comment type="pathway">
    <text evidence="1">Amino-acid biosynthesis; L-lysine biosynthesis via DAP pathway; LL-2,6-diaminopimelate from (S)-tetrahydrodipicolinate (succinylase route): step 1/3.</text>
</comment>
<comment type="subcellular location">
    <subcellularLocation>
        <location evidence="1">Cytoplasm</location>
    </subcellularLocation>
</comment>
<comment type="similarity">
    <text evidence="1">Belongs to the transferase hexapeptide repeat family.</text>
</comment>
<protein>
    <recommendedName>
        <fullName evidence="1">2,3,4,5-tetrahydropyridine-2,6-dicarboxylate N-succinyltransferase</fullName>
        <ecNumber evidence="1">2.3.1.117</ecNumber>
    </recommendedName>
    <alternativeName>
        <fullName evidence="1">Tetrahydrodipicolinate N-succinyltransferase</fullName>
        <shortName evidence="1">THP succinyltransferase</shortName>
        <shortName evidence="1">Tetrahydropicolinate succinylase</shortName>
    </alternativeName>
</protein>
<keyword id="KW-0012">Acyltransferase</keyword>
<keyword id="KW-0028">Amino-acid biosynthesis</keyword>
<keyword id="KW-0963">Cytoplasm</keyword>
<keyword id="KW-0220">Diaminopimelate biosynthesis</keyword>
<keyword id="KW-0457">Lysine biosynthesis</keyword>
<keyword id="KW-0677">Repeat</keyword>
<keyword id="KW-0808">Transferase</keyword>
<feature type="chain" id="PRO_1000134053" description="2,3,4,5-tetrahydropyridine-2,6-dicarboxylate N-succinyltransferase">
    <location>
        <begin position="1"/>
        <end position="280"/>
    </location>
</feature>
<gene>
    <name evidence="1" type="primary">dapD</name>
    <name type="ordered locus">Mext_1574</name>
</gene>
<dbReference type="EC" id="2.3.1.117" evidence="1"/>
<dbReference type="EMBL" id="CP000908">
    <property type="protein sequence ID" value="ABY29973.1"/>
    <property type="molecule type" value="Genomic_DNA"/>
</dbReference>
<dbReference type="RefSeq" id="WP_012253176.1">
    <property type="nucleotide sequence ID" value="NC_010172.1"/>
</dbReference>
<dbReference type="SMR" id="A9W317"/>
<dbReference type="KEGG" id="mex:Mext_1574"/>
<dbReference type="eggNOG" id="COG2171">
    <property type="taxonomic scope" value="Bacteria"/>
</dbReference>
<dbReference type="HOGENOM" id="CLU_050859_0_1_5"/>
<dbReference type="BioCyc" id="MEXT419610:MEXT_RS07995-MONOMER"/>
<dbReference type="UniPathway" id="UPA00034">
    <property type="reaction ID" value="UER00019"/>
</dbReference>
<dbReference type="GO" id="GO:0005737">
    <property type="term" value="C:cytoplasm"/>
    <property type="evidence" value="ECO:0007669"/>
    <property type="project" value="UniProtKB-SubCell"/>
</dbReference>
<dbReference type="GO" id="GO:0008666">
    <property type="term" value="F:2,3,4,5-tetrahydropyridine-2,6-dicarboxylate N-succinyltransferase activity"/>
    <property type="evidence" value="ECO:0007669"/>
    <property type="project" value="UniProtKB-UniRule"/>
</dbReference>
<dbReference type="GO" id="GO:0016779">
    <property type="term" value="F:nucleotidyltransferase activity"/>
    <property type="evidence" value="ECO:0007669"/>
    <property type="project" value="TreeGrafter"/>
</dbReference>
<dbReference type="GO" id="GO:0019877">
    <property type="term" value="P:diaminopimelate biosynthetic process"/>
    <property type="evidence" value="ECO:0007669"/>
    <property type="project" value="UniProtKB-UniRule"/>
</dbReference>
<dbReference type="GO" id="GO:0009089">
    <property type="term" value="P:lysine biosynthetic process via diaminopimelate"/>
    <property type="evidence" value="ECO:0007669"/>
    <property type="project" value="UniProtKB-UniRule"/>
</dbReference>
<dbReference type="CDD" id="cd03350">
    <property type="entry name" value="LbH_THP_succinylT"/>
    <property type="match status" value="1"/>
</dbReference>
<dbReference type="Gene3D" id="2.160.10.10">
    <property type="entry name" value="Hexapeptide repeat proteins"/>
    <property type="match status" value="1"/>
</dbReference>
<dbReference type="Gene3D" id="1.10.166.10">
    <property type="entry name" value="Tetrahydrodipicolinate-N-succinyltransferase, N-terminal domain"/>
    <property type="match status" value="1"/>
</dbReference>
<dbReference type="HAMAP" id="MF_00811">
    <property type="entry name" value="DapD"/>
    <property type="match status" value="1"/>
</dbReference>
<dbReference type="InterPro" id="IPR005664">
    <property type="entry name" value="DapD_Trfase_Hexpep_rpt_fam"/>
</dbReference>
<dbReference type="InterPro" id="IPR001451">
    <property type="entry name" value="Hexapep"/>
</dbReference>
<dbReference type="InterPro" id="IPR023180">
    <property type="entry name" value="THP_succinylTrfase_dom1"/>
</dbReference>
<dbReference type="InterPro" id="IPR037133">
    <property type="entry name" value="THP_succinylTrfase_N_sf"/>
</dbReference>
<dbReference type="InterPro" id="IPR011004">
    <property type="entry name" value="Trimer_LpxA-like_sf"/>
</dbReference>
<dbReference type="NCBIfam" id="TIGR00965">
    <property type="entry name" value="dapD"/>
    <property type="match status" value="1"/>
</dbReference>
<dbReference type="NCBIfam" id="NF008808">
    <property type="entry name" value="PRK11830.1"/>
    <property type="match status" value="1"/>
</dbReference>
<dbReference type="PANTHER" id="PTHR19136:SF52">
    <property type="entry name" value="2,3,4,5-TETRAHYDROPYRIDINE-2,6-DICARBOXYLATE N-SUCCINYLTRANSFERASE"/>
    <property type="match status" value="1"/>
</dbReference>
<dbReference type="PANTHER" id="PTHR19136">
    <property type="entry name" value="MOLYBDENUM COFACTOR GUANYLYLTRANSFERASE"/>
    <property type="match status" value="1"/>
</dbReference>
<dbReference type="Pfam" id="PF14602">
    <property type="entry name" value="Hexapep_2"/>
    <property type="match status" value="1"/>
</dbReference>
<dbReference type="Pfam" id="PF14805">
    <property type="entry name" value="THDPS_N_2"/>
    <property type="match status" value="1"/>
</dbReference>
<dbReference type="SUPFAM" id="SSF51161">
    <property type="entry name" value="Trimeric LpxA-like enzymes"/>
    <property type="match status" value="1"/>
</dbReference>
<sequence>MSHADLEKTIEAAWEERAGISTATTGAVREAVDEALNLLDSGQARVAEKAGDSWQVNQWLKKAVLLSFRLNDMVPIEGGPGSSAWWDKVPSKFDNWGEAEFRAAGFRAVPGCFVRRGSYIAPGAVLMPSFINLGAHVGEGTMVDTWVTIGSCAQVGKNCHISGGAGIAGVLEPLQANPVIIEDNCFVGARAEVAEGVIIGEGSVLSMGVYIGASTRIIDRTTGETFYGRVPPYSVVVSGTTPGKPLPDGTPGPGLYCAVIVKRVDAGTRAKTGINELLRT</sequence>
<proteinExistence type="inferred from homology"/>
<evidence type="ECO:0000255" key="1">
    <source>
        <dbReference type="HAMAP-Rule" id="MF_00811"/>
    </source>
</evidence>
<reference key="1">
    <citation type="submission" date="2007-12" db="EMBL/GenBank/DDBJ databases">
        <title>Complete sequence of Methylobacterium extorquens PA1.</title>
        <authorList>
            <consortium name="US DOE Joint Genome Institute"/>
            <person name="Copeland A."/>
            <person name="Lucas S."/>
            <person name="Lapidus A."/>
            <person name="Barry K."/>
            <person name="Glavina del Rio T."/>
            <person name="Dalin E."/>
            <person name="Tice H."/>
            <person name="Pitluck S."/>
            <person name="Saunders E."/>
            <person name="Brettin T."/>
            <person name="Bruce D."/>
            <person name="Detter J.C."/>
            <person name="Han C."/>
            <person name="Schmutz J."/>
            <person name="Larimer F."/>
            <person name="Land M."/>
            <person name="Hauser L."/>
            <person name="Kyrpides N."/>
            <person name="Kim E."/>
            <person name="Marx C."/>
            <person name="Richardson P."/>
        </authorList>
    </citation>
    <scope>NUCLEOTIDE SEQUENCE [LARGE SCALE GENOMIC DNA]</scope>
    <source>
        <strain>PA1</strain>
    </source>
</reference>